<keyword id="KW-0027">Amidation</keyword>
<keyword id="KW-0878">Amphibian defense peptide</keyword>
<keyword id="KW-0903">Direct protein sequencing</keyword>
<keyword id="KW-0964">Secreted</keyword>
<proteinExistence type="evidence at protein level"/>
<dbReference type="GO" id="GO:0005576">
    <property type="term" value="C:extracellular region"/>
    <property type="evidence" value="ECO:0000314"/>
    <property type="project" value="UniProtKB"/>
</dbReference>
<dbReference type="GO" id="GO:0006952">
    <property type="term" value="P:defense response"/>
    <property type="evidence" value="ECO:0007669"/>
    <property type="project" value="UniProtKB-KW"/>
</dbReference>
<reference evidence="3" key="1">
    <citation type="journal article" date="2005" name="Rapid Commun. Mass Spectrom.">
        <title>The rothein peptides from the skin secretion of Roth's tree frog Litoria rothii. Sequence determination using positive and negative ion electrospray mass spectrometry.</title>
        <authorList>
            <person name="Brinkworth C.S."/>
            <person name="Bowie J.H."/>
            <person name="Bilusich D."/>
            <person name="Tyler M.J."/>
        </authorList>
    </citation>
    <scope>PROTEIN SEQUENCE</scope>
    <scope>FUNCTION</scope>
    <scope>SUBCELLULAR LOCATION</scope>
    <scope>TISSUE SPECIFICITY</scope>
    <scope>MASS SPECTROMETRY</scope>
    <scope>AMIDATION AT LEU-30</scope>
    <source>
        <tissue evidence="1">Skin secretion</tissue>
    </source>
</reference>
<accession>P86511</accession>
<organism>
    <name type="scientific">Litoria rothii</name>
    <name type="common">Roth's tree frog</name>
    <name type="synonym">Hyla rothii</name>
    <dbReference type="NCBI Taxonomy" id="336074"/>
    <lineage>
        <taxon>Eukaryota</taxon>
        <taxon>Metazoa</taxon>
        <taxon>Chordata</taxon>
        <taxon>Craniata</taxon>
        <taxon>Vertebrata</taxon>
        <taxon>Euteleostomi</taxon>
        <taxon>Amphibia</taxon>
        <taxon>Batrachia</taxon>
        <taxon>Anura</taxon>
        <taxon>Neobatrachia</taxon>
        <taxon>Hyloidea</taxon>
        <taxon>Hylidae</taxon>
        <taxon>Pelodryadinae</taxon>
        <taxon>Litoria</taxon>
    </lineage>
</organism>
<feature type="peptide" id="PRO_0000394437" description="Rothein 3.1" evidence="1">
    <location>
        <begin position="1"/>
        <end position="30"/>
    </location>
</feature>
<feature type="modified residue" description="Leucine amide" evidence="1">
    <location>
        <position position="30"/>
    </location>
</feature>
<sequence>ASAAGAVRAGDDETLLKPVLNSLDNLVSGL</sequence>
<evidence type="ECO:0000269" key="1">
    <source>
    </source>
</evidence>
<evidence type="ECO:0000303" key="2">
    <source>
    </source>
</evidence>
<evidence type="ECO:0000305" key="3"/>
<protein>
    <recommendedName>
        <fullName evidence="2">Rothein 3.1</fullName>
    </recommendedName>
</protein>
<comment type="function">
    <text evidence="1">Lacks antimicrobial activity. Does not inhibit the formation of NO by neuronal nitric oxide.</text>
</comment>
<comment type="subcellular location">
    <subcellularLocation>
        <location evidence="1">Secreted</location>
    </subcellularLocation>
</comment>
<comment type="tissue specificity">
    <text evidence="1">Expressed by the skin dorsal glands.</text>
</comment>
<comment type="mass spectrometry"/>
<comment type="similarity">
    <text evidence="3">Belongs to the frog skin active peptide (FSAP) family. Rothein subfamily.</text>
</comment>
<name>ROT31_LITRO</name>